<protein>
    <recommendedName>
        <fullName>Glutamate decarboxylase beta</fullName>
        <shortName>GAD-beta</shortName>
        <ecNumber>4.1.1.15</ecNumber>
    </recommendedName>
</protein>
<organism>
    <name type="scientific">Escherichia coli O6:H1 (strain CFT073 / ATCC 700928 / UPEC)</name>
    <dbReference type="NCBI Taxonomy" id="199310"/>
    <lineage>
        <taxon>Bacteria</taxon>
        <taxon>Pseudomonadati</taxon>
        <taxon>Pseudomonadota</taxon>
        <taxon>Gammaproteobacteria</taxon>
        <taxon>Enterobacterales</taxon>
        <taxon>Enterobacteriaceae</taxon>
        <taxon>Escherichia</taxon>
    </lineage>
</organism>
<dbReference type="EC" id="4.1.1.15"/>
<dbReference type="EMBL" id="AE014075">
    <property type="protein sequence ID" value="AAN80380.1"/>
    <property type="status" value="ALT_INIT"/>
    <property type="molecule type" value="Genomic_DNA"/>
</dbReference>
<dbReference type="RefSeq" id="WP_000358860.1">
    <property type="nucleotide sequence ID" value="NZ_CP051263.1"/>
</dbReference>
<dbReference type="SMR" id="Q8FHG5"/>
<dbReference type="STRING" id="199310.c1922"/>
<dbReference type="KEGG" id="ecc:c1922"/>
<dbReference type="eggNOG" id="COG0076">
    <property type="taxonomic scope" value="Bacteria"/>
</dbReference>
<dbReference type="HOGENOM" id="CLU_019582_2_1_6"/>
<dbReference type="Proteomes" id="UP000001410">
    <property type="component" value="Chromosome"/>
</dbReference>
<dbReference type="GO" id="GO:0005829">
    <property type="term" value="C:cytosol"/>
    <property type="evidence" value="ECO:0007669"/>
    <property type="project" value="TreeGrafter"/>
</dbReference>
<dbReference type="GO" id="GO:0004351">
    <property type="term" value="F:glutamate decarboxylase activity"/>
    <property type="evidence" value="ECO:0007669"/>
    <property type="project" value="UniProtKB-EC"/>
</dbReference>
<dbReference type="GO" id="GO:0030170">
    <property type="term" value="F:pyridoxal phosphate binding"/>
    <property type="evidence" value="ECO:0007669"/>
    <property type="project" value="InterPro"/>
</dbReference>
<dbReference type="GO" id="GO:0006538">
    <property type="term" value="P:glutamate catabolic process"/>
    <property type="evidence" value="ECO:0007669"/>
    <property type="project" value="TreeGrafter"/>
</dbReference>
<dbReference type="CDD" id="cd06450">
    <property type="entry name" value="DOPA_deC_like"/>
    <property type="match status" value="1"/>
</dbReference>
<dbReference type="FunFam" id="3.40.640.10:FF:000017">
    <property type="entry name" value="Glutamate decarboxylase"/>
    <property type="match status" value="1"/>
</dbReference>
<dbReference type="FunFam" id="3.90.1150.160:FF:000002">
    <property type="entry name" value="Glutamate decarboxylase"/>
    <property type="match status" value="1"/>
</dbReference>
<dbReference type="FunFam" id="4.10.280.50:FF:000001">
    <property type="entry name" value="Glutamate decarboxylase"/>
    <property type="match status" value="1"/>
</dbReference>
<dbReference type="Gene3D" id="3.90.1150.160">
    <property type="match status" value="1"/>
</dbReference>
<dbReference type="Gene3D" id="4.10.280.50">
    <property type="match status" value="1"/>
</dbReference>
<dbReference type="Gene3D" id="3.40.640.10">
    <property type="entry name" value="Type I PLP-dependent aspartate aminotransferase-like (Major domain)"/>
    <property type="match status" value="1"/>
</dbReference>
<dbReference type="InterPro" id="IPR010107">
    <property type="entry name" value="Glutamate_decarboxylase"/>
</dbReference>
<dbReference type="InterPro" id="IPR002129">
    <property type="entry name" value="PyrdxlP-dep_de-COase"/>
</dbReference>
<dbReference type="InterPro" id="IPR015424">
    <property type="entry name" value="PyrdxlP-dep_Trfase"/>
</dbReference>
<dbReference type="InterPro" id="IPR015421">
    <property type="entry name" value="PyrdxlP-dep_Trfase_major"/>
</dbReference>
<dbReference type="InterPro" id="IPR021115">
    <property type="entry name" value="Pyridoxal-P_BS"/>
</dbReference>
<dbReference type="NCBIfam" id="TIGR01788">
    <property type="entry name" value="Glu-decarb-GAD"/>
    <property type="match status" value="1"/>
</dbReference>
<dbReference type="PANTHER" id="PTHR43321">
    <property type="entry name" value="GLUTAMATE DECARBOXYLASE"/>
    <property type="match status" value="1"/>
</dbReference>
<dbReference type="PANTHER" id="PTHR43321:SF3">
    <property type="entry name" value="GLUTAMATE DECARBOXYLASE"/>
    <property type="match status" value="1"/>
</dbReference>
<dbReference type="Pfam" id="PF00282">
    <property type="entry name" value="Pyridoxal_deC"/>
    <property type="match status" value="1"/>
</dbReference>
<dbReference type="SUPFAM" id="SSF53383">
    <property type="entry name" value="PLP-dependent transferases"/>
    <property type="match status" value="1"/>
</dbReference>
<dbReference type="PROSITE" id="PS00392">
    <property type="entry name" value="DDC_GAD_HDC_YDC"/>
    <property type="match status" value="1"/>
</dbReference>
<comment type="function">
    <text evidence="1">Converts glutamate to gamma-aminobutyrate (GABA), consuming one intracellular proton in the reaction. The gad system helps to maintain a near-neutral intracellular pH when cells are exposed to extremely acidic conditions. The ability to survive transit through the acidic conditions of the stomach is essential for successful colonization of the mammalian host by commensal and pathogenic bacteria (By similarity).</text>
</comment>
<comment type="catalytic activity">
    <reaction>
        <text>L-glutamate + H(+) = 4-aminobutanoate + CO2</text>
        <dbReference type="Rhea" id="RHEA:17785"/>
        <dbReference type="ChEBI" id="CHEBI:15378"/>
        <dbReference type="ChEBI" id="CHEBI:16526"/>
        <dbReference type="ChEBI" id="CHEBI:29985"/>
        <dbReference type="ChEBI" id="CHEBI:59888"/>
        <dbReference type="EC" id="4.1.1.15"/>
    </reaction>
</comment>
<comment type="cofactor">
    <cofactor evidence="1">
        <name>pyridoxal 5'-phosphate</name>
        <dbReference type="ChEBI" id="CHEBI:597326"/>
    </cofactor>
</comment>
<comment type="subunit">
    <text evidence="1">Homohexamer composed of three dimers.</text>
</comment>
<comment type="induction">
    <text evidence="1">By acidic conditions. Expression is regulated by a complex system involving RpoS, cAMP, CRP, EvgAS, H-NS, GadE, GadW and GadX. The level of involvement for each regulator varies depending upon the growth phase and the medium (By similarity).</text>
</comment>
<comment type="similarity">
    <text evidence="2">Belongs to the group II decarboxylase family.</text>
</comment>
<comment type="sequence caution" evidence="2">
    <conflict type="erroneous initiation">
        <sequence resource="EMBL-CDS" id="AAN80380"/>
    </conflict>
</comment>
<evidence type="ECO:0000250" key="1"/>
<evidence type="ECO:0000305" key="2"/>
<proteinExistence type="inferred from homology"/>
<accession>Q8FHG5</accession>
<reference key="1">
    <citation type="journal article" date="2002" name="Proc. Natl. Acad. Sci. U.S.A.">
        <title>Extensive mosaic structure revealed by the complete genome sequence of uropathogenic Escherichia coli.</title>
        <authorList>
            <person name="Welch R.A."/>
            <person name="Burland V."/>
            <person name="Plunkett G. III"/>
            <person name="Redford P."/>
            <person name="Roesch P."/>
            <person name="Rasko D."/>
            <person name="Buckles E.L."/>
            <person name="Liou S.-R."/>
            <person name="Boutin A."/>
            <person name="Hackett J."/>
            <person name="Stroud D."/>
            <person name="Mayhew G.F."/>
            <person name="Rose D.J."/>
            <person name="Zhou S."/>
            <person name="Schwartz D.C."/>
            <person name="Perna N.T."/>
            <person name="Mobley H.L.T."/>
            <person name="Donnenberg M.S."/>
            <person name="Blattner F.R."/>
        </authorList>
    </citation>
    <scope>NUCLEOTIDE SEQUENCE [LARGE SCALE GENOMIC DNA]</scope>
    <source>
        <strain>CFT073 / ATCC 700928 / UPEC</strain>
    </source>
</reference>
<sequence>MDKKQVTDLRSELLDSRFGAKSISTIAESKRFPLHEMRDDVAFQIINDELYLDGNARQNLATFCQTWDDDNVHKLMDLSINKNWIDKEEYPQSAAIDLRCVNMVADLWHAPAPKNGQAVGTNTIGSSEACMLGGMAMKWRWRKRMEAAGKPTNKPNLVCGPVQICWHKFARYWDVELREIPMRPGQLFMDPKRMIEACDENTIGVVPTFGVTYTGNYEFPQPLHDALDKFQADTGIDIDMHIDAASGGFLAPFVAPDIVWDFRLPRVKSISASGHKFGLAPLGCGWVIWRDEEALPQELVFNVDYLGGQIGTFAINFSRPAGQVIAQYYEFLRLGREGYTKVQNASYQVAAYLADEIAKLGPYEFICTGRPDEGIPAVCFKLKDGEDPGYTLYDLSERLRLRGWQVPAFTLGGEATDIVVMRIMCRRGFEMDFAELLLEDYKASLKYLSDHPKLQGIAQQNSFKHT</sequence>
<name>DCEB_ECOL6</name>
<gene>
    <name type="primary">gadB</name>
    <name type="ordered locus">c1922</name>
</gene>
<keyword id="KW-0007">Acetylation</keyword>
<keyword id="KW-0210">Decarboxylase</keyword>
<keyword id="KW-0456">Lyase</keyword>
<keyword id="KW-0663">Pyridoxal phosphate</keyword>
<keyword id="KW-1185">Reference proteome</keyword>
<feature type="chain" id="PRO_0000146983" description="Glutamate decarboxylase beta">
    <location>
        <begin position="1"/>
        <end position="466"/>
    </location>
</feature>
<feature type="binding site" evidence="1">
    <location>
        <position position="62"/>
    </location>
    <ligand>
        <name>substrate</name>
    </ligand>
</feature>
<feature type="binding site" evidence="1">
    <location>
        <position position="83"/>
    </location>
    <ligand>
        <name>substrate</name>
    </ligand>
</feature>
<feature type="binding site" evidence="1">
    <location>
        <begin position="126"/>
        <end position="127"/>
    </location>
    <ligand>
        <name>pyridoxal 5'-phosphate</name>
        <dbReference type="ChEBI" id="CHEBI:597326"/>
    </ligand>
</feature>
<feature type="binding site" evidence="1">
    <location>
        <position position="212"/>
    </location>
    <ligand>
        <name>pyridoxal 5'-phosphate</name>
        <dbReference type="ChEBI" id="CHEBI:597326"/>
    </ligand>
</feature>
<feature type="binding site" evidence="1">
    <location>
        <position position="275"/>
    </location>
    <ligand>
        <name>pyridoxal 5'-phosphate</name>
        <dbReference type="ChEBI" id="CHEBI:597326"/>
    </ligand>
</feature>
<feature type="modified residue" description="N6-(pyridoxal phosphate)lysine" evidence="1">
    <location>
        <position position="276"/>
    </location>
</feature>
<feature type="modified residue" description="N6-acetyllysine" evidence="1">
    <location>
        <position position="446"/>
    </location>
</feature>
<feature type="modified residue" description="N6-acetyllysine" evidence="1">
    <location>
        <position position="453"/>
    </location>
</feature>
<feature type="modified residue" description="N6-acetyllysine" evidence="1">
    <location>
        <position position="464"/>
    </location>
</feature>